<accession>C1CN66</accession>
<organism>
    <name type="scientific">Streptococcus pneumoniae (strain P1031)</name>
    <dbReference type="NCBI Taxonomy" id="488223"/>
    <lineage>
        <taxon>Bacteria</taxon>
        <taxon>Bacillati</taxon>
        <taxon>Bacillota</taxon>
        <taxon>Bacilli</taxon>
        <taxon>Lactobacillales</taxon>
        <taxon>Streptococcaceae</taxon>
        <taxon>Streptococcus</taxon>
    </lineage>
</organism>
<feature type="chain" id="PRO_1000189813" description="Chromosomal replication initiator protein DnaA">
    <location>
        <begin position="1"/>
        <end position="453"/>
    </location>
</feature>
<feature type="region of interest" description="Domain I, interacts with DnaA modulators" evidence="1">
    <location>
        <begin position="1"/>
        <end position="74"/>
    </location>
</feature>
<feature type="region of interest" description="Domain II" evidence="1">
    <location>
        <begin position="74"/>
        <end position="113"/>
    </location>
</feature>
<feature type="region of interest" description="Domain III, AAA+ region" evidence="1">
    <location>
        <begin position="114"/>
        <end position="331"/>
    </location>
</feature>
<feature type="region of interest" description="Domain IV, binds dsDNA" evidence="1">
    <location>
        <begin position="332"/>
        <end position="453"/>
    </location>
</feature>
<feature type="binding site" evidence="1">
    <location>
        <position position="158"/>
    </location>
    <ligand>
        <name>ATP</name>
        <dbReference type="ChEBI" id="CHEBI:30616"/>
    </ligand>
</feature>
<feature type="binding site" evidence="1">
    <location>
        <position position="160"/>
    </location>
    <ligand>
        <name>ATP</name>
        <dbReference type="ChEBI" id="CHEBI:30616"/>
    </ligand>
</feature>
<feature type="binding site" evidence="1">
    <location>
        <position position="161"/>
    </location>
    <ligand>
        <name>ATP</name>
        <dbReference type="ChEBI" id="CHEBI:30616"/>
    </ligand>
</feature>
<feature type="binding site" evidence="1">
    <location>
        <position position="162"/>
    </location>
    <ligand>
        <name>ATP</name>
        <dbReference type="ChEBI" id="CHEBI:30616"/>
    </ligand>
</feature>
<name>DNAA_STRZP</name>
<sequence length="453" mass="51768">MKEKQFWNRILEFAQERLTRSMYDFYAIQAEVIKVEENVATIFLPRSEMEMVWEKQLKDIIVVAGFEIYDAEITPHYIFTKPQDTTSSQVEEATNLTLYDYSPKLVSIPYSDTGLKEKYTFDNFIQGDGNVWAVSAALAVSEDLALTYNPLFIYGGPGLGKTHLLNAIGNEILKNIPNARVKYIPAESFINDFLDHLRLGEMEKFKKTYRSLDLLLIDDIQSLSGKKVATQEEFFNTFNALHDKQKQIVLTSDRSPKHLEGLEERLVTRFSWGLTQTITPPDFETRIAILQSKTEHLGYNFQSDTLEYLAGQFDSNVRDLEGAINDITLIARVKKIKDITIDIAAEAIRARKQDVSQMLVIPIDKIQTEVGNFYGVSIKEMKGSRRLQNIVLARQVAMYLSRELTDNSLPKIGKEFGGKDHTTVIHAHAKIKSLIDQDDNLRLEIESIKKKIK</sequence>
<dbReference type="EMBL" id="CP000920">
    <property type="protein sequence ID" value="ACO21605.1"/>
    <property type="molecule type" value="Genomic_DNA"/>
</dbReference>
<dbReference type="RefSeq" id="WP_000660622.1">
    <property type="nucleotide sequence ID" value="NC_012467.1"/>
</dbReference>
<dbReference type="SMR" id="C1CN66"/>
<dbReference type="KEGG" id="spp:SPP_0001"/>
<dbReference type="HOGENOM" id="CLU_026910_3_1_9"/>
<dbReference type="GO" id="GO:0005737">
    <property type="term" value="C:cytoplasm"/>
    <property type="evidence" value="ECO:0007669"/>
    <property type="project" value="UniProtKB-SubCell"/>
</dbReference>
<dbReference type="GO" id="GO:0005886">
    <property type="term" value="C:plasma membrane"/>
    <property type="evidence" value="ECO:0007669"/>
    <property type="project" value="TreeGrafter"/>
</dbReference>
<dbReference type="GO" id="GO:0005524">
    <property type="term" value="F:ATP binding"/>
    <property type="evidence" value="ECO:0007669"/>
    <property type="project" value="UniProtKB-UniRule"/>
</dbReference>
<dbReference type="GO" id="GO:0016887">
    <property type="term" value="F:ATP hydrolysis activity"/>
    <property type="evidence" value="ECO:0007669"/>
    <property type="project" value="InterPro"/>
</dbReference>
<dbReference type="GO" id="GO:0003688">
    <property type="term" value="F:DNA replication origin binding"/>
    <property type="evidence" value="ECO:0007669"/>
    <property type="project" value="UniProtKB-UniRule"/>
</dbReference>
<dbReference type="GO" id="GO:0008289">
    <property type="term" value="F:lipid binding"/>
    <property type="evidence" value="ECO:0007669"/>
    <property type="project" value="UniProtKB-KW"/>
</dbReference>
<dbReference type="GO" id="GO:0006270">
    <property type="term" value="P:DNA replication initiation"/>
    <property type="evidence" value="ECO:0007669"/>
    <property type="project" value="UniProtKB-UniRule"/>
</dbReference>
<dbReference type="GO" id="GO:0006275">
    <property type="term" value="P:regulation of DNA replication"/>
    <property type="evidence" value="ECO:0007669"/>
    <property type="project" value="UniProtKB-UniRule"/>
</dbReference>
<dbReference type="CDD" id="cd00009">
    <property type="entry name" value="AAA"/>
    <property type="match status" value="1"/>
</dbReference>
<dbReference type="CDD" id="cd06571">
    <property type="entry name" value="Bac_DnaA_C"/>
    <property type="match status" value="1"/>
</dbReference>
<dbReference type="FunFam" id="1.10.1750.10:FF:000002">
    <property type="entry name" value="Chromosomal replication initiator protein DnaA"/>
    <property type="match status" value="1"/>
</dbReference>
<dbReference type="FunFam" id="1.10.8.60:FF:000129">
    <property type="entry name" value="Chromosomal replication initiator protein DnaA"/>
    <property type="match status" value="1"/>
</dbReference>
<dbReference type="FunFam" id="3.40.50.300:FF:000668">
    <property type="entry name" value="Chromosomal replication initiator protein DnaA"/>
    <property type="match status" value="1"/>
</dbReference>
<dbReference type="Gene3D" id="1.10.1750.10">
    <property type="match status" value="1"/>
</dbReference>
<dbReference type="Gene3D" id="1.10.8.60">
    <property type="match status" value="1"/>
</dbReference>
<dbReference type="Gene3D" id="3.40.50.300">
    <property type="entry name" value="P-loop containing nucleotide triphosphate hydrolases"/>
    <property type="match status" value="1"/>
</dbReference>
<dbReference type="HAMAP" id="MF_00377">
    <property type="entry name" value="DnaA_bact"/>
    <property type="match status" value="1"/>
</dbReference>
<dbReference type="InterPro" id="IPR003593">
    <property type="entry name" value="AAA+_ATPase"/>
</dbReference>
<dbReference type="InterPro" id="IPR001957">
    <property type="entry name" value="Chromosome_initiator_DnaA"/>
</dbReference>
<dbReference type="InterPro" id="IPR020591">
    <property type="entry name" value="Chromosome_initiator_DnaA-like"/>
</dbReference>
<dbReference type="InterPro" id="IPR018312">
    <property type="entry name" value="Chromosome_initiator_DnaA_CS"/>
</dbReference>
<dbReference type="InterPro" id="IPR013159">
    <property type="entry name" value="DnaA_C"/>
</dbReference>
<dbReference type="InterPro" id="IPR013317">
    <property type="entry name" value="DnaA_dom"/>
</dbReference>
<dbReference type="InterPro" id="IPR027417">
    <property type="entry name" value="P-loop_NTPase"/>
</dbReference>
<dbReference type="InterPro" id="IPR010921">
    <property type="entry name" value="Trp_repressor/repl_initiator"/>
</dbReference>
<dbReference type="NCBIfam" id="TIGR00362">
    <property type="entry name" value="DnaA"/>
    <property type="match status" value="1"/>
</dbReference>
<dbReference type="PANTHER" id="PTHR30050">
    <property type="entry name" value="CHROMOSOMAL REPLICATION INITIATOR PROTEIN DNAA"/>
    <property type="match status" value="1"/>
</dbReference>
<dbReference type="PANTHER" id="PTHR30050:SF2">
    <property type="entry name" value="CHROMOSOMAL REPLICATION INITIATOR PROTEIN DNAA"/>
    <property type="match status" value="1"/>
</dbReference>
<dbReference type="Pfam" id="PF00308">
    <property type="entry name" value="Bac_DnaA"/>
    <property type="match status" value="1"/>
</dbReference>
<dbReference type="Pfam" id="PF08299">
    <property type="entry name" value="Bac_DnaA_C"/>
    <property type="match status" value="1"/>
</dbReference>
<dbReference type="PRINTS" id="PR00051">
    <property type="entry name" value="DNAA"/>
</dbReference>
<dbReference type="SMART" id="SM00382">
    <property type="entry name" value="AAA"/>
    <property type="match status" value="1"/>
</dbReference>
<dbReference type="SMART" id="SM00760">
    <property type="entry name" value="Bac_DnaA_C"/>
    <property type="match status" value="1"/>
</dbReference>
<dbReference type="SUPFAM" id="SSF52540">
    <property type="entry name" value="P-loop containing nucleoside triphosphate hydrolases"/>
    <property type="match status" value="1"/>
</dbReference>
<dbReference type="SUPFAM" id="SSF48295">
    <property type="entry name" value="TrpR-like"/>
    <property type="match status" value="1"/>
</dbReference>
<dbReference type="PROSITE" id="PS01008">
    <property type="entry name" value="DNAA"/>
    <property type="match status" value="1"/>
</dbReference>
<proteinExistence type="inferred from homology"/>
<keyword id="KW-0067">ATP-binding</keyword>
<keyword id="KW-0963">Cytoplasm</keyword>
<keyword id="KW-0235">DNA replication</keyword>
<keyword id="KW-0238">DNA-binding</keyword>
<keyword id="KW-0446">Lipid-binding</keyword>
<keyword id="KW-0547">Nucleotide-binding</keyword>
<gene>
    <name evidence="1" type="primary">dnaA</name>
    <name type="ordered locus">SPP_0001</name>
</gene>
<protein>
    <recommendedName>
        <fullName evidence="1">Chromosomal replication initiator protein DnaA</fullName>
    </recommendedName>
</protein>
<evidence type="ECO:0000255" key="1">
    <source>
        <dbReference type="HAMAP-Rule" id="MF_00377"/>
    </source>
</evidence>
<reference key="1">
    <citation type="journal article" date="2010" name="Genome Biol.">
        <title>Structure and dynamics of the pan-genome of Streptococcus pneumoniae and closely related species.</title>
        <authorList>
            <person name="Donati C."/>
            <person name="Hiller N.L."/>
            <person name="Tettelin H."/>
            <person name="Muzzi A."/>
            <person name="Croucher N.J."/>
            <person name="Angiuoli S.V."/>
            <person name="Oggioni M."/>
            <person name="Dunning Hotopp J.C."/>
            <person name="Hu F.Z."/>
            <person name="Riley D.R."/>
            <person name="Covacci A."/>
            <person name="Mitchell T.J."/>
            <person name="Bentley S.D."/>
            <person name="Kilian M."/>
            <person name="Ehrlich G.D."/>
            <person name="Rappuoli R."/>
            <person name="Moxon E.R."/>
            <person name="Masignani V."/>
        </authorList>
    </citation>
    <scope>NUCLEOTIDE SEQUENCE [LARGE SCALE GENOMIC DNA]</scope>
    <source>
        <strain>P1031</strain>
    </source>
</reference>
<comment type="function">
    <text evidence="1">Plays an essential role in the initiation and regulation of chromosomal replication. ATP-DnaA binds to the origin of replication (oriC) to initiate formation of the DNA replication initiation complex once per cell cycle. Binds the DnaA box (a 9 base pair repeat at the origin) and separates the double-stranded (ds)DNA. Forms a right-handed helical filament on oriC DNA; dsDNA binds to the exterior of the filament while single-stranded (ss)DNA is stabiized in the filament's interior. The ATP-DnaA-oriC complex binds and stabilizes one strand of the AT-rich DNA unwinding element (DUE), permitting loading of DNA polymerase. After initiation quickly degrades to an ADP-DnaA complex that is not apt for DNA replication. Binds acidic phospholipids.</text>
</comment>
<comment type="subunit">
    <text evidence="1">Oligomerizes as a right-handed, spiral filament on DNA at oriC.</text>
</comment>
<comment type="subcellular location">
    <subcellularLocation>
        <location evidence="1">Cytoplasm</location>
    </subcellularLocation>
</comment>
<comment type="domain">
    <text evidence="1">Domain I is involved in oligomerization and binding regulators, domain II is flexibile and of varying length in different bacteria, domain III forms the AAA+ region, while domain IV binds dsDNA.</text>
</comment>
<comment type="similarity">
    <text evidence="1">Belongs to the DnaA family.</text>
</comment>